<comment type="function">
    <text evidence="1">The alpha subunit is responsible for the aldol cleavage of indoleglycerol phosphate to indole and glyceraldehyde 3-phosphate.</text>
</comment>
<comment type="catalytic activity">
    <reaction evidence="1">
        <text>(1S,2R)-1-C-(indol-3-yl)glycerol 3-phosphate + L-serine = D-glyceraldehyde 3-phosphate + L-tryptophan + H2O</text>
        <dbReference type="Rhea" id="RHEA:10532"/>
        <dbReference type="ChEBI" id="CHEBI:15377"/>
        <dbReference type="ChEBI" id="CHEBI:33384"/>
        <dbReference type="ChEBI" id="CHEBI:57912"/>
        <dbReference type="ChEBI" id="CHEBI:58866"/>
        <dbReference type="ChEBI" id="CHEBI:59776"/>
        <dbReference type="EC" id="4.2.1.20"/>
    </reaction>
</comment>
<comment type="pathway">
    <text evidence="1">Amino-acid biosynthesis; L-tryptophan biosynthesis; L-tryptophan from chorismate: step 5/5.</text>
</comment>
<comment type="subunit">
    <text evidence="1">Tetramer of two alpha and two beta chains.</text>
</comment>
<comment type="similarity">
    <text evidence="1">Belongs to the TrpA family.</text>
</comment>
<reference key="1">
    <citation type="journal article" date="2009" name="J. Bacteriol.">
        <title>Complete genome sequence of Erythrobacter litoralis HTCC2594.</title>
        <authorList>
            <person name="Oh H.M."/>
            <person name="Giovannoni S.J."/>
            <person name="Ferriera S."/>
            <person name="Johnson J."/>
            <person name="Cho J.C."/>
        </authorList>
    </citation>
    <scope>NUCLEOTIDE SEQUENCE [LARGE SCALE GENOMIC DNA]</scope>
    <source>
        <strain>HTCC2594</strain>
    </source>
</reference>
<feature type="chain" id="PRO_1000018200" description="Tryptophan synthase alpha chain">
    <location>
        <begin position="1"/>
        <end position="259"/>
    </location>
</feature>
<feature type="active site" description="Proton acceptor" evidence="1">
    <location>
        <position position="42"/>
    </location>
</feature>
<feature type="active site" description="Proton acceptor" evidence="1">
    <location>
        <position position="53"/>
    </location>
</feature>
<dbReference type="EC" id="4.2.1.20" evidence="1"/>
<dbReference type="EMBL" id="CP000157">
    <property type="protein sequence ID" value="ABC63611.1"/>
    <property type="molecule type" value="Genomic_DNA"/>
</dbReference>
<dbReference type="RefSeq" id="WP_011414445.1">
    <property type="nucleotide sequence ID" value="NC_007722.1"/>
</dbReference>
<dbReference type="SMR" id="Q2N9N0"/>
<dbReference type="STRING" id="314225.ELI_07595"/>
<dbReference type="KEGG" id="eli:ELI_07595"/>
<dbReference type="eggNOG" id="COG0159">
    <property type="taxonomic scope" value="Bacteria"/>
</dbReference>
<dbReference type="HOGENOM" id="CLU_016734_0_0_5"/>
<dbReference type="OrthoDB" id="9804578at2"/>
<dbReference type="UniPathway" id="UPA00035">
    <property type="reaction ID" value="UER00044"/>
</dbReference>
<dbReference type="Proteomes" id="UP000008808">
    <property type="component" value="Chromosome"/>
</dbReference>
<dbReference type="GO" id="GO:0005829">
    <property type="term" value="C:cytosol"/>
    <property type="evidence" value="ECO:0007669"/>
    <property type="project" value="TreeGrafter"/>
</dbReference>
<dbReference type="GO" id="GO:0004834">
    <property type="term" value="F:tryptophan synthase activity"/>
    <property type="evidence" value="ECO:0007669"/>
    <property type="project" value="UniProtKB-UniRule"/>
</dbReference>
<dbReference type="CDD" id="cd04724">
    <property type="entry name" value="Tryptophan_synthase_alpha"/>
    <property type="match status" value="1"/>
</dbReference>
<dbReference type="FunFam" id="3.20.20.70:FF:000037">
    <property type="entry name" value="Tryptophan synthase alpha chain"/>
    <property type="match status" value="1"/>
</dbReference>
<dbReference type="Gene3D" id="3.20.20.70">
    <property type="entry name" value="Aldolase class I"/>
    <property type="match status" value="1"/>
</dbReference>
<dbReference type="HAMAP" id="MF_00131">
    <property type="entry name" value="Trp_synth_alpha"/>
    <property type="match status" value="1"/>
</dbReference>
<dbReference type="InterPro" id="IPR013785">
    <property type="entry name" value="Aldolase_TIM"/>
</dbReference>
<dbReference type="InterPro" id="IPR011060">
    <property type="entry name" value="RibuloseP-bd_barrel"/>
</dbReference>
<dbReference type="InterPro" id="IPR018204">
    <property type="entry name" value="Trp_synthase_alpha_AS"/>
</dbReference>
<dbReference type="InterPro" id="IPR002028">
    <property type="entry name" value="Trp_synthase_suA"/>
</dbReference>
<dbReference type="NCBIfam" id="TIGR00262">
    <property type="entry name" value="trpA"/>
    <property type="match status" value="1"/>
</dbReference>
<dbReference type="PANTHER" id="PTHR43406:SF1">
    <property type="entry name" value="TRYPTOPHAN SYNTHASE ALPHA CHAIN, CHLOROPLASTIC"/>
    <property type="match status" value="1"/>
</dbReference>
<dbReference type="PANTHER" id="PTHR43406">
    <property type="entry name" value="TRYPTOPHAN SYNTHASE, ALPHA CHAIN"/>
    <property type="match status" value="1"/>
</dbReference>
<dbReference type="Pfam" id="PF00290">
    <property type="entry name" value="Trp_syntA"/>
    <property type="match status" value="1"/>
</dbReference>
<dbReference type="SUPFAM" id="SSF51366">
    <property type="entry name" value="Ribulose-phoshate binding barrel"/>
    <property type="match status" value="1"/>
</dbReference>
<dbReference type="PROSITE" id="PS00167">
    <property type="entry name" value="TRP_SYNTHASE_ALPHA"/>
    <property type="match status" value="1"/>
</dbReference>
<name>TRPA_ERYLH</name>
<gene>
    <name evidence="1" type="primary">trpA</name>
    <name type="ordered locus">ELI_07595</name>
</gene>
<evidence type="ECO:0000255" key="1">
    <source>
        <dbReference type="HAMAP-Rule" id="MF_00131"/>
    </source>
</evidence>
<accession>Q2N9N0</accession>
<sequence>MTRLQNAFSKPHAAFVAFITAGDGDTAANLDALVAGGADVIELGMPFTDPMADGPAIQAANIRSLARGTTTRDVLMIANEFRERHPEVPLVLMGYANPMVRRGPEWFAAECKGCGVDGVICVDIPPEEDAELGPALRAAGIAPIRLATPTTDAKRLPAVLEGCEGFVYYVSVAGITGKQQAALDTIESNVARIKRSTDLPVAVGFGVRTPEQAGAIARVADGVVVGSALVELVGEFGTEAPAKLQELTKALADAVHSAR</sequence>
<keyword id="KW-0028">Amino-acid biosynthesis</keyword>
<keyword id="KW-0057">Aromatic amino acid biosynthesis</keyword>
<keyword id="KW-0456">Lyase</keyword>
<keyword id="KW-1185">Reference proteome</keyword>
<keyword id="KW-0822">Tryptophan biosynthesis</keyword>
<organism>
    <name type="scientific">Erythrobacter litoralis (strain HTCC2594)</name>
    <dbReference type="NCBI Taxonomy" id="314225"/>
    <lineage>
        <taxon>Bacteria</taxon>
        <taxon>Pseudomonadati</taxon>
        <taxon>Pseudomonadota</taxon>
        <taxon>Alphaproteobacteria</taxon>
        <taxon>Sphingomonadales</taxon>
        <taxon>Erythrobacteraceae</taxon>
        <taxon>Erythrobacter/Porphyrobacter group</taxon>
        <taxon>Erythrobacter</taxon>
    </lineage>
</organism>
<protein>
    <recommendedName>
        <fullName evidence="1">Tryptophan synthase alpha chain</fullName>
        <ecNumber evidence="1">4.2.1.20</ecNumber>
    </recommendedName>
</protein>
<proteinExistence type="inferred from homology"/>